<feature type="chain" id="PRO_0000439243" description="Transcription factor MYB65">
    <location>
        <begin position="1"/>
        <end position="553"/>
    </location>
</feature>
<feature type="domain" description="HTH myb-type 1" evidence="1">
    <location>
        <begin position="38"/>
        <end position="90"/>
    </location>
</feature>
<feature type="domain" description="HTH myb-type 2" evidence="1">
    <location>
        <begin position="91"/>
        <end position="145"/>
    </location>
</feature>
<feature type="DNA-binding region" description="H-T-H motif" evidence="1">
    <location>
        <begin position="66"/>
        <end position="90"/>
    </location>
</feature>
<feature type="DNA-binding region" description="H-T-H motif" evidence="1">
    <location>
        <begin position="118"/>
        <end position="141"/>
    </location>
</feature>
<feature type="region of interest" description="Disordered" evidence="2">
    <location>
        <begin position="1"/>
        <end position="44"/>
    </location>
</feature>
<organism>
    <name type="scientific">Arabidopsis thaliana</name>
    <name type="common">Mouse-ear cress</name>
    <dbReference type="NCBI Taxonomy" id="3702"/>
    <lineage>
        <taxon>Eukaryota</taxon>
        <taxon>Viridiplantae</taxon>
        <taxon>Streptophyta</taxon>
        <taxon>Embryophyta</taxon>
        <taxon>Tracheophyta</taxon>
        <taxon>Spermatophyta</taxon>
        <taxon>Magnoliopsida</taxon>
        <taxon>eudicotyledons</taxon>
        <taxon>Gunneridae</taxon>
        <taxon>Pentapetalae</taxon>
        <taxon>rosids</taxon>
        <taxon>malvids</taxon>
        <taxon>Brassicales</taxon>
        <taxon>Brassicaceae</taxon>
        <taxon>Camelineae</taxon>
        <taxon>Arabidopsis</taxon>
    </lineage>
</organism>
<reference key="1">
    <citation type="journal article" date="2001" name="Plant Physiol.">
        <title>GAMYB-like genes, flowering, and gibberellin signaling in Arabidopsis.</title>
        <authorList>
            <person name="Gocal G.F.W."/>
            <person name="Sheldon C.C."/>
            <person name="Gubler F."/>
            <person name="Moritz T."/>
            <person name="Bagnall D.J."/>
            <person name="MacMillan C.P."/>
            <person name="Li S.F."/>
            <person name="Parish R.W."/>
            <person name="Dennis E.S."/>
            <person name="Weigel D."/>
            <person name="King R.W."/>
        </authorList>
    </citation>
    <scope>NUCLEOTIDE SEQUENCE [GENOMIC DNA]</scope>
    <scope>FUNCTION</scope>
    <scope>TISSUE SPECIFICITY</scope>
    <scope>DEVELOPMENTAL STAGE</scope>
    <source>
        <strain>cv. Columbia</strain>
        <strain>cv. Landsberg erecta</strain>
    </source>
</reference>
<reference key="2">
    <citation type="submission" date="2004-01" db="EMBL/GenBank/DDBJ databases">
        <title>The MYB transcription factor family in Arabidopsis: A genome-wide cloning and expression pattern analysis.</title>
        <authorList>
            <person name="Qu L."/>
            <person name="Gu H."/>
        </authorList>
    </citation>
    <scope>NUCLEOTIDE SEQUENCE [MRNA]</scope>
</reference>
<reference key="3">
    <citation type="journal article" date="2000" name="Nature">
        <title>Sequence and analysis of chromosome 3 of the plant Arabidopsis thaliana.</title>
        <authorList>
            <person name="Salanoubat M."/>
            <person name="Lemcke K."/>
            <person name="Rieger M."/>
            <person name="Ansorge W."/>
            <person name="Unseld M."/>
            <person name="Fartmann B."/>
            <person name="Valle G."/>
            <person name="Bloecker H."/>
            <person name="Perez-Alonso M."/>
            <person name="Obermaier B."/>
            <person name="Delseny M."/>
            <person name="Boutry M."/>
            <person name="Grivell L.A."/>
            <person name="Mache R."/>
            <person name="Puigdomenech P."/>
            <person name="De Simone V."/>
            <person name="Choisne N."/>
            <person name="Artiguenave F."/>
            <person name="Robert C."/>
            <person name="Brottier P."/>
            <person name="Wincker P."/>
            <person name="Cattolico L."/>
            <person name="Weissenbach J."/>
            <person name="Saurin W."/>
            <person name="Quetier F."/>
            <person name="Schaefer M."/>
            <person name="Mueller-Auer S."/>
            <person name="Gabel C."/>
            <person name="Fuchs M."/>
            <person name="Benes V."/>
            <person name="Wurmbach E."/>
            <person name="Drzonek H."/>
            <person name="Erfle H."/>
            <person name="Jordan N."/>
            <person name="Bangert S."/>
            <person name="Wiedelmann R."/>
            <person name="Kranz H."/>
            <person name="Voss H."/>
            <person name="Holland R."/>
            <person name="Brandt P."/>
            <person name="Nyakatura G."/>
            <person name="Vezzi A."/>
            <person name="D'Angelo M."/>
            <person name="Pallavicini A."/>
            <person name="Toppo S."/>
            <person name="Simionati B."/>
            <person name="Conrad A."/>
            <person name="Hornischer K."/>
            <person name="Kauer G."/>
            <person name="Loehnert T.-H."/>
            <person name="Nordsiek G."/>
            <person name="Reichelt J."/>
            <person name="Scharfe M."/>
            <person name="Schoen O."/>
            <person name="Bargues M."/>
            <person name="Terol J."/>
            <person name="Climent J."/>
            <person name="Navarro P."/>
            <person name="Collado C."/>
            <person name="Perez-Perez A."/>
            <person name="Ottenwaelder B."/>
            <person name="Duchemin D."/>
            <person name="Cooke R."/>
            <person name="Laudie M."/>
            <person name="Berger-Llauro C."/>
            <person name="Purnelle B."/>
            <person name="Masuy D."/>
            <person name="de Haan M."/>
            <person name="Maarse A.C."/>
            <person name="Alcaraz J.-P."/>
            <person name="Cottet A."/>
            <person name="Casacuberta E."/>
            <person name="Monfort A."/>
            <person name="Argiriou A."/>
            <person name="Flores M."/>
            <person name="Liguori R."/>
            <person name="Vitale D."/>
            <person name="Mannhaupt G."/>
            <person name="Haase D."/>
            <person name="Schoof H."/>
            <person name="Rudd S."/>
            <person name="Zaccaria P."/>
            <person name="Mewes H.-W."/>
            <person name="Mayer K.F.X."/>
            <person name="Kaul S."/>
            <person name="Town C.D."/>
            <person name="Koo H.L."/>
            <person name="Tallon L.J."/>
            <person name="Jenkins J."/>
            <person name="Rooney T."/>
            <person name="Rizzo M."/>
            <person name="Walts A."/>
            <person name="Utterback T."/>
            <person name="Fujii C.Y."/>
            <person name="Shea T.P."/>
            <person name="Creasy T.H."/>
            <person name="Haas B."/>
            <person name="Maiti R."/>
            <person name="Wu D."/>
            <person name="Peterson J."/>
            <person name="Van Aken S."/>
            <person name="Pai G."/>
            <person name="Militscher J."/>
            <person name="Sellers P."/>
            <person name="Gill J.E."/>
            <person name="Feldblyum T.V."/>
            <person name="Preuss D."/>
            <person name="Lin X."/>
            <person name="Nierman W.C."/>
            <person name="Salzberg S.L."/>
            <person name="White O."/>
            <person name="Venter J.C."/>
            <person name="Fraser C.M."/>
            <person name="Kaneko T."/>
            <person name="Nakamura Y."/>
            <person name="Sato S."/>
            <person name="Kato T."/>
            <person name="Asamizu E."/>
            <person name="Sasamoto S."/>
            <person name="Kimura T."/>
            <person name="Idesawa K."/>
            <person name="Kawashima K."/>
            <person name="Kishida Y."/>
            <person name="Kiyokawa C."/>
            <person name="Kohara M."/>
            <person name="Matsumoto M."/>
            <person name="Matsuno A."/>
            <person name="Muraki A."/>
            <person name="Nakayama S."/>
            <person name="Nakazaki N."/>
            <person name="Shinpo S."/>
            <person name="Takeuchi C."/>
            <person name="Wada T."/>
            <person name="Watanabe A."/>
            <person name="Yamada M."/>
            <person name="Yasuda M."/>
            <person name="Tabata S."/>
        </authorList>
    </citation>
    <scope>NUCLEOTIDE SEQUENCE [LARGE SCALE GENOMIC DNA]</scope>
    <source>
        <strain>cv. Columbia</strain>
    </source>
</reference>
<reference key="4">
    <citation type="journal article" date="2017" name="Plant J.">
        <title>Araport11: a complete reannotation of the Arabidopsis thaliana reference genome.</title>
        <authorList>
            <person name="Cheng C.Y."/>
            <person name="Krishnakumar V."/>
            <person name="Chan A.P."/>
            <person name="Thibaud-Nissen F."/>
            <person name="Schobel S."/>
            <person name="Town C.D."/>
        </authorList>
    </citation>
    <scope>GENOME REANNOTATION</scope>
    <source>
        <strain>cv. Columbia</strain>
    </source>
</reference>
<reference key="5">
    <citation type="journal article" date="2003" name="Science">
        <title>Empirical analysis of transcriptional activity in the Arabidopsis genome.</title>
        <authorList>
            <person name="Yamada K."/>
            <person name="Lim J."/>
            <person name="Dale J.M."/>
            <person name="Chen H."/>
            <person name="Shinn P."/>
            <person name="Palm C.J."/>
            <person name="Southwick A.M."/>
            <person name="Wu H.C."/>
            <person name="Kim C.J."/>
            <person name="Nguyen M."/>
            <person name="Pham P.K."/>
            <person name="Cheuk R.F."/>
            <person name="Karlin-Newmann G."/>
            <person name="Liu S.X."/>
            <person name="Lam B."/>
            <person name="Sakano H."/>
            <person name="Wu T."/>
            <person name="Yu G."/>
            <person name="Miranda M."/>
            <person name="Quach H.L."/>
            <person name="Tripp M."/>
            <person name="Chang C.H."/>
            <person name="Lee J.M."/>
            <person name="Toriumi M.J."/>
            <person name="Chan M.M."/>
            <person name="Tang C.C."/>
            <person name="Onodera C.S."/>
            <person name="Deng J.M."/>
            <person name="Akiyama K."/>
            <person name="Ansari Y."/>
            <person name="Arakawa T."/>
            <person name="Banh J."/>
            <person name="Banno F."/>
            <person name="Bowser L."/>
            <person name="Brooks S.Y."/>
            <person name="Carninci P."/>
            <person name="Chao Q."/>
            <person name="Choy N."/>
            <person name="Enju A."/>
            <person name="Goldsmith A.D."/>
            <person name="Gurjal M."/>
            <person name="Hansen N.F."/>
            <person name="Hayashizaki Y."/>
            <person name="Johnson-Hopson C."/>
            <person name="Hsuan V.W."/>
            <person name="Iida K."/>
            <person name="Karnes M."/>
            <person name="Khan S."/>
            <person name="Koesema E."/>
            <person name="Ishida J."/>
            <person name="Jiang P.X."/>
            <person name="Jones T."/>
            <person name="Kawai J."/>
            <person name="Kamiya A."/>
            <person name="Meyers C."/>
            <person name="Nakajima M."/>
            <person name="Narusaka M."/>
            <person name="Seki M."/>
            <person name="Sakurai T."/>
            <person name="Satou M."/>
            <person name="Tamse R."/>
            <person name="Vaysberg M."/>
            <person name="Wallender E.K."/>
            <person name="Wong C."/>
            <person name="Yamamura Y."/>
            <person name="Yuan S."/>
            <person name="Shinozaki K."/>
            <person name="Davis R.W."/>
            <person name="Theologis A."/>
            <person name="Ecker J.R."/>
        </authorList>
    </citation>
    <scope>NUCLEOTIDE SEQUENCE [LARGE SCALE MRNA]</scope>
    <source>
        <strain>cv. Columbia</strain>
    </source>
</reference>
<reference key="6">
    <citation type="journal article" date="1998" name="Plant J.">
        <title>Towards functional characterisation of the members of the R2R3-MYB gene family from Arabidopsis thaliana.</title>
        <authorList>
            <person name="Kranz H.D."/>
            <person name="Denekamp M."/>
            <person name="Greco R."/>
            <person name="Jin H.-L."/>
            <person name="Leyva A."/>
            <person name="Meissner R.C."/>
            <person name="Petroni K."/>
            <person name="Urzainqui A."/>
            <person name="Bevan M."/>
            <person name="Martin C."/>
            <person name="Smeekens S."/>
            <person name="Tonelli C."/>
            <person name="Paz-Ares J."/>
            <person name="Weisshaar B."/>
        </authorList>
    </citation>
    <scope>NUCLEOTIDE SEQUENCE OF 84-300</scope>
    <scope>GENE FAMILY</scope>
    <scope>NOMENCLATURE</scope>
    <source>
        <strain>cv. Columbia</strain>
    </source>
</reference>
<reference key="7">
    <citation type="submission" date="1997-05" db="EMBL/GenBank/DDBJ databases">
        <title>One hundred R2R3-MYB genes in the genome of Arabidopsis thaliana.</title>
        <authorList>
            <person name="Romero I."/>
            <person name="Fuertes A."/>
            <person name="Benito M.J."/>
            <person name="Malpica J."/>
            <person name="Leyva A."/>
            <person name="Paz-Ares J."/>
        </authorList>
    </citation>
    <scope>NUCLEOTIDE SEQUENCE [MRNA] OF 84-128</scope>
    <source>
        <strain>cv. Landsberg erecta</strain>
    </source>
</reference>
<reference key="8">
    <citation type="journal article" date="2001" name="Curr. Opin. Plant Biol.">
        <title>The R2R3-MYB gene family in Arabidopsis thaliana.</title>
        <authorList>
            <person name="Stracke R."/>
            <person name="Werber M."/>
            <person name="Weisshaar B."/>
        </authorList>
    </citation>
    <scope>GENE FAMILY</scope>
    <scope>NOMENCLATURE</scope>
    <source>
        <strain>cv. Columbia</strain>
    </source>
</reference>
<reference key="9">
    <citation type="journal article" date="2004" name="Development">
        <title>Modulation of floral development by a gibberellin-regulated microRNA.</title>
        <authorList>
            <person name="Achard P."/>
            <person name="Herr A."/>
            <person name="Baulcombe D.C."/>
            <person name="Harberd N.P."/>
        </authorList>
    </citation>
    <scope>REPRESSION BY MICRORNA159</scope>
</reference>
<reference key="10">
    <citation type="journal article" date="2005" name="Plant Cell">
        <title>The Arabidopsis GAMYB-like genes, MYB33 and MYB65, are microRNA-regulated genes that redundantly facilitate anther development.</title>
        <authorList>
            <person name="Millar A.A."/>
            <person name="Gubler F."/>
        </authorList>
    </citation>
    <scope>FUNCTION</scope>
    <scope>DISRUPTION PHENOTYPE</scope>
    <scope>TISSUE SPECIFICITY</scope>
    <scope>DEVELOPMENTAL STAGE</scope>
    <scope>REGULATION BY MIR159</scope>
    <source>
        <strain>cv. Columbia</strain>
    </source>
</reference>
<reference key="11">
    <citation type="journal article" date="2006" name="Plant Mol. Biol.">
        <title>The MYB transcription factor superfamily of Arabidopsis: expression analysis and phylogenetic comparison with the rice MYB family.</title>
        <authorList>
            <person name="Chen Y."/>
            <person name="Yang X."/>
            <person name="He K."/>
            <person name="Liu M."/>
            <person name="Li J."/>
            <person name="Gao Z."/>
            <person name="Lin Z."/>
            <person name="Zhang Y."/>
            <person name="Wang X."/>
            <person name="Qiu X."/>
            <person name="Shen Y."/>
            <person name="Zhang L."/>
            <person name="Deng X."/>
            <person name="Luo J."/>
            <person name="Deng X.-W."/>
            <person name="Chen Z."/>
            <person name="Gu H."/>
            <person name="Qu L.-J."/>
        </authorList>
    </citation>
    <scope>INDUCTION BY ETHYLENE AND SALICYLIC ACID</scope>
</reference>
<reference key="12">
    <citation type="journal article" date="2007" name="Proc. Natl. Acad. Sci. U.S.A.">
        <title>Genetic analysis reveals functional redundancy and the major target genes of the Arabidopsis miR159 family.</title>
        <authorList>
            <person name="Allen R.S."/>
            <person name="Li J."/>
            <person name="Stahle M.I."/>
            <person name="Dubroue A."/>
            <person name="Gubler F."/>
            <person name="Millar A.A."/>
        </authorList>
    </citation>
    <scope>REPRESSION BY MICRORNA159</scope>
</reference>
<reference key="13">
    <citation type="journal article" date="2010" name="Plant Physiol.">
        <title>The microRNA159-regulated GAMYB-like genes inhibit growth and promote programmed cell death in Arabidopsis.</title>
        <authorList>
            <person name="Alonso-Peral M.M."/>
            <person name="Li J."/>
            <person name="Li Y."/>
            <person name="Allen R.S."/>
            <person name="Schnippenkoetter W."/>
            <person name="Ohms S."/>
            <person name="White R.G."/>
            <person name="Millar A.A."/>
        </authorList>
    </citation>
    <scope>FUNCTION</scope>
    <scope>DISRUPTION PHENOTYPE</scope>
    <scope>REPRESSION BY MICRORNA159</scope>
    <source>
        <strain>cv. Columbia</strain>
    </source>
</reference>
<reference key="14">
    <citation type="journal article" date="2013" name="PLoS Genet.">
        <title>MYB97, MYB101 and MYB120 function as male factors that control pollen tube-synergid interaction in Arabidopsis thaliana fertilization.</title>
        <authorList>
            <person name="Liang Y."/>
            <person name="Tan Z.-M."/>
            <person name="Zhu L."/>
            <person name="Niu Q.-K."/>
            <person name="Zhou J.-J."/>
            <person name="Li M."/>
            <person name="Chen L.-Q."/>
            <person name="Zhang X.-Q."/>
            <person name="Ye D."/>
        </authorList>
    </citation>
    <scope>TISSUE SPECIFICITY</scope>
    <source>
        <strain>cv. Columbia</strain>
    </source>
</reference>
<accession>Q9FR97</accession>
<accession>O65898</accession>
<accession>Q7DLH4</accession>
<evidence type="ECO:0000255" key="1">
    <source>
        <dbReference type="PROSITE-ProRule" id="PRU00625"/>
    </source>
</evidence>
<evidence type="ECO:0000256" key="2">
    <source>
        <dbReference type="SAM" id="MobiDB-lite"/>
    </source>
</evidence>
<evidence type="ECO:0000269" key="3">
    <source>
    </source>
</evidence>
<evidence type="ECO:0000269" key="4">
    <source>
    </source>
</evidence>
<evidence type="ECO:0000269" key="5">
    <source>
    </source>
</evidence>
<evidence type="ECO:0000269" key="6">
    <source>
    </source>
</evidence>
<evidence type="ECO:0000269" key="7">
    <source>
    </source>
</evidence>
<evidence type="ECO:0000269" key="8">
    <source>
    </source>
</evidence>
<evidence type="ECO:0000269" key="9">
    <source>
    </source>
</evidence>
<evidence type="ECO:0000303" key="10">
    <source>
    </source>
</evidence>
<evidence type="ECO:0000305" key="11"/>
<evidence type="ECO:0000312" key="12">
    <source>
        <dbReference type="Araport" id="AT3G11440"/>
    </source>
</evidence>
<evidence type="ECO:0000312" key="13">
    <source>
        <dbReference type="EMBL" id="AAG51434.1"/>
    </source>
</evidence>
<proteinExistence type="evidence at transcript level"/>
<dbReference type="EMBL" id="AF048840">
    <property type="protein sequence ID" value="AAG43496.1"/>
    <property type="molecule type" value="Genomic_DNA"/>
</dbReference>
<dbReference type="EMBL" id="AY519585">
    <property type="protein sequence ID" value="AAS10055.1"/>
    <property type="molecule type" value="mRNA"/>
</dbReference>
<dbReference type="EMBL" id="AC008153">
    <property type="protein sequence ID" value="AAG51434.1"/>
    <property type="molecule type" value="Genomic_DNA"/>
</dbReference>
<dbReference type="EMBL" id="CP002686">
    <property type="protein sequence ID" value="AEE75047.1"/>
    <property type="molecule type" value="Genomic_DNA"/>
</dbReference>
<dbReference type="EMBL" id="CP002686">
    <property type="protein sequence ID" value="ANM65045.1"/>
    <property type="molecule type" value="Genomic_DNA"/>
</dbReference>
<dbReference type="EMBL" id="CP002686">
    <property type="protein sequence ID" value="ANM65047.1"/>
    <property type="molecule type" value="Genomic_DNA"/>
</dbReference>
<dbReference type="EMBL" id="BT003940">
    <property type="protein sequence ID" value="AAO41985.1"/>
    <property type="molecule type" value="mRNA"/>
</dbReference>
<dbReference type="EMBL" id="BT005120">
    <property type="protein sequence ID" value="AAO50653.1"/>
    <property type="molecule type" value="mRNA"/>
</dbReference>
<dbReference type="EMBL" id="AF062899">
    <property type="protein sequence ID" value="AAC83621.1"/>
    <property type="status" value="ALT_FRAME"/>
    <property type="molecule type" value="mRNA"/>
</dbReference>
<dbReference type="EMBL" id="Z95778">
    <property type="protein sequence ID" value="CAB09210.1"/>
    <property type="molecule type" value="mRNA"/>
</dbReference>
<dbReference type="EMBL" id="Z95788">
    <property type="protein sequence ID" value="CAB09220.1"/>
    <property type="molecule type" value="mRNA"/>
</dbReference>
<dbReference type="PIR" id="T51671">
    <property type="entry name" value="T51671"/>
</dbReference>
<dbReference type="PIR" id="T52125">
    <property type="entry name" value="T52125"/>
</dbReference>
<dbReference type="RefSeq" id="NP_001327042.1">
    <property type="nucleotide sequence ID" value="NM_001337927.1"/>
</dbReference>
<dbReference type="RefSeq" id="NP_001327044.1">
    <property type="nucleotide sequence ID" value="NM_001337926.1"/>
</dbReference>
<dbReference type="RefSeq" id="NP_187751.1">
    <property type="nucleotide sequence ID" value="NM_111977.5"/>
</dbReference>
<dbReference type="SMR" id="Q9FR97"/>
<dbReference type="FunCoup" id="Q9FR97">
    <property type="interactions" value="489"/>
</dbReference>
<dbReference type="IntAct" id="Q9FR97">
    <property type="interactions" value="18"/>
</dbReference>
<dbReference type="STRING" id="3702.Q9FR97"/>
<dbReference type="GlyGen" id="Q9FR97">
    <property type="glycosylation" value="1 site"/>
</dbReference>
<dbReference type="PaxDb" id="3702-AT3G11440.1"/>
<dbReference type="EnsemblPlants" id="AT3G11440.1">
    <property type="protein sequence ID" value="AT3G11440.1"/>
    <property type="gene ID" value="AT3G11440"/>
</dbReference>
<dbReference type="EnsemblPlants" id="AT3G11440.3">
    <property type="protein sequence ID" value="AT3G11440.3"/>
    <property type="gene ID" value="AT3G11440"/>
</dbReference>
<dbReference type="EnsemblPlants" id="AT3G11440.4">
    <property type="protein sequence ID" value="AT3G11440.4"/>
    <property type="gene ID" value="AT3G11440"/>
</dbReference>
<dbReference type="GeneID" id="820317"/>
<dbReference type="Gramene" id="AT3G11440.1">
    <property type="protein sequence ID" value="AT3G11440.1"/>
    <property type="gene ID" value="AT3G11440"/>
</dbReference>
<dbReference type="Gramene" id="AT3G11440.3">
    <property type="protein sequence ID" value="AT3G11440.3"/>
    <property type="gene ID" value="AT3G11440"/>
</dbReference>
<dbReference type="Gramene" id="AT3G11440.4">
    <property type="protein sequence ID" value="AT3G11440.4"/>
    <property type="gene ID" value="AT3G11440"/>
</dbReference>
<dbReference type="KEGG" id="ath:AT3G11440"/>
<dbReference type="Araport" id="AT3G11440"/>
<dbReference type="TAIR" id="AT3G11440">
    <property type="gene designation" value="MYB65"/>
</dbReference>
<dbReference type="eggNOG" id="KOG0048">
    <property type="taxonomic scope" value="Eukaryota"/>
</dbReference>
<dbReference type="HOGENOM" id="CLU_023548_1_1_1"/>
<dbReference type="InParanoid" id="Q9FR97"/>
<dbReference type="OMA" id="DYRHMAS"/>
<dbReference type="PhylomeDB" id="Q9FR97"/>
<dbReference type="PRO" id="PR:Q9FR97"/>
<dbReference type="Proteomes" id="UP000006548">
    <property type="component" value="Chromosome 3"/>
</dbReference>
<dbReference type="ExpressionAtlas" id="Q9FR97">
    <property type="expression patterns" value="baseline and differential"/>
</dbReference>
<dbReference type="GO" id="GO:0005634">
    <property type="term" value="C:nucleus"/>
    <property type="evidence" value="ECO:0000304"/>
    <property type="project" value="TAIR"/>
</dbReference>
<dbReference type="GO" id="GO:0003700">
    <property type="term" value="F:DNA-binding transcription factor activity"/>
    <property type="evidence" value="ECO:0000250"/>
    <property type="project" value="TAIR"/>
</dbReference>
<dbReference type="GO" id="GO:0000976">
    <property type="term" value="F:transcription cis-regulatory region binding"/>
    <property type="evidence" value="ECO:0000353"/>
    <property type="project" value="TAIR"/>
</dbReference>
<dbReference type="GO" id="GO:0048653">
    <property type="term" value="P:anther development"/>
    <property type="evidence" value="ECO:0000315"/>
    <property type="project" value="UniProtKB"/>
</dbReference>
<dbReference type="GO" id="GO:0048655">
    <property type="term" value="P:anther wall tapetum morphogenesis"/>
    <property type="evidence" value="ECO:0000315"/>
    <property type="project" value="UniProtKB"/>
</dbReference>
<dbReference type="GO" id="GO:0009740">
    <property type="term" value="P:gibberellic acid mediated signaling pathway"/>
    <property type="evidence" value="ECO:0000304"/>
    <property type="project" value="TAIR"/>
</dbReference>
<dbReference type="GO" id="GO:0008285">
    <property type="term" value="P:negative regulation of cell population proliferation"/>
    <property type="evidence" value="ECO:0000315"/>
    <property type="project" value="UniProtKB"/>
</dbReference>
<dbReference type="GO" id="GO:0045926">
    <property type="term" value="P:negative regulation of growth"/>
    <property type="evidence" value="ECO:0000315"/>
    <property type="project" value="TAIR"/>
</dbReference>
<dbReference type="GO" id="GO:0048235">
    <property type="term" value="P:pollen sperm cell differentiation"/>
    <property type="evidence" value="ECO:0000316"/>
    <property type="project" value="TAIR"/>
</dbReference>
<dbReference type="GO" id="GO:0045893">
    <property type="term" value="P:positive regulation of DNA-templated transcription"/>
    <property type="evidence" value="ECO:0000315"/>
    <property type="project" value="TAIR"/>
</dbReference>
<dbReference type="GO" id="GO:0043068">
    <property type="term" value="P:positive regulation of programmed cell death"/>
    <property type="evidence" value="ECO:0000315"/>
    <property type="project" value="TAIR"/>
</dbReference>
<dbReference type="GO" id="GO:1990019">
    <property type="term" value="P:protein storage vacuole organization"/>
    <property type="evidence" value="ECO:0000315"/>
    <property type="project" value="UniProtKB"/>
</dbReference>
<dbReference type="GO" id="GO:0006355">
    <property type="term" value="P:regulation of DNA-templated transcription"/>
    <property type="evidence" value="ECO:0000304"/>
    <property type="project" value="TAIR"/>
</dbReference>
<dbReference type="CDD" id="cd00167">
    <property type="entry name" value="SANT"/>
    <property type="match status" value="2"/>
</dbReference>
<dbReference type="FunFam" id="1.10.10.60:FF:000001">
    <property type="entry name" value="MYB-related transcription factor"/>
    <property type="match status" value="1"/>
</dbReference>
<dbReference type="FunFam" id="1.10.10.60:FF:000119">
    <property type="entry name" value="Transcription factor GAMYB"/>
    <property type="match status" value="1"/>
</dbReference>
<dbReference type="Gene3D" id="1.10.10.60">
    <property type="entry name" value="Homeodomain-like"/>
    <property type="match status" value="2"/>
</dbReference>
<dbReference type="InterPro" id="IPR016310">
    <property type="entry name" value="GAMYB-like"/>
</dbReference>
<dbReference type="InterPro" id="IPR009057">
    <property type="entry name" value="Homeodomain-like_sf"/>
</dbReference>
<dbReference type="InterPro" id="IPR017930">
    <property type="entry name" value="Myb_dom"/>
</dbReference>
<dbReference type="InterPro" id="IPR001005">
    <property type="entry name" value="SANT/Myb"/>
</dbReference>
<dbReference type="PANTHER" id="PTHR47995">
    <property type="entry name" value="TRANSCRIPTION FACTOR MYB33-RELATED"/>
    <property type="match status" value="1"/>
</dbReference>
<dbReference type="PANTHER" id="PTHR47995:SF18">
    <property type="entry name" value="TRANSCRIPTION FACTOR MYB65"/>
    <property type="match status" value="1"/>
</dbReference>
<dbReference type="Pfam" id="PF00249">
    <property type="entry name" value="Myb_DNA-binding"/>
    <property type="match status" value="2"/>
</dbReference>
<dbReference type="PIRSF" id="PIRSF001693">
    <property type="entry name" value="Transcription_factor_GAMYB"/>
    <property type="match status" value="1"/>
</dbReference>
<dbReference type="SMART" id="SM00717">
    <property type="entry name" value="SANT"/>
    <property type="match status" value="2"/>
</dbReference>
<dbReference type="SUPFAM" id="SSF46689">
    <property type="entry name" value="Homeodomain-like"/>
    <property type="match status" value="1"/>
</dbReference>
<dbReference type="PROSITE" id="PS51294">
    <property type="entry name" value="HTH_MYB"/>
    <property type="match status" value="2"/>
</dbReference>
<comment type="function">
    <text evidence="3 5 8">Transcriptional activator of alpha-amylase expression that binds to 5'-CAACTGTC-3' motif in target gene promoter (PubMed:11743113). In vegetative tissues, inhibits growth by reducing cell proliferation. Promotes the expression of aleurone-related genes (e.g. CP1, CP, GASA1, BXL1 and BXL2) in seeds. Together with MYB33 and MYB101, promotes the programmed cell death (PCD) the vacuolation of protein storage vacuoles (PSVs) in the aleurone layers during seed germination (PubMed:20699403). Together with MYB33, facilitates anther and tapetum development (PubMed:15722475).</text>
</comment>
<comment type="subcellular location">
    <subcellularLocation>
        <location evidence="1">Nucleus</location>
    </subcellularLocation>
</comment>
<comment type="tissue specificity">
    <text evidence="3 5 9">Mostly expressed in roots (e.g. root tips), stems, pollen, shoot apices, flowers and floral shoot tips, and, to a lower extent, in leaves and siliques.</text>
</comment>
<comment type="developmental stage">
    <text evidence="3 5">In germinating seeds, present in the root tip and in a linear array of up to 20 to 30 cells above the root tip. Strongly expressed in the inflorescence apex, and, to some extent, in the inflorescence stem, the vascular tissue, and the vascular tissue in leaf primordia (PubMed:11743113). In flowers, expressed in sepals, style, receptacle, anther filaments, and connective but not in anthers themselves (PubMed:15722475).</text>
</comment>
<comment type="induction">
    <text evidence="4 5 6 7 8">Repressed by microRNA159 (miR159a and miR159b) in vegetative tissues (PubMed:15226253, PubMed:17916625, PubMed:20699403). Specific expression in floral organs and in the shoot apices is regulated via miR159-mediated degradation (PubMed:15722475). Slightly induced by ethylene and salicylic acid (PubMed:16463103).</text>
</comment>
<comment type="disruption phenotype">
    <text evidence="5 8">Reduced expression levels of aleurone-related genes (e.g. CP1, CP, GASA1, BXL1 and BXL2) in seeds. The triple mutant myb33 myb65 myb101 has a male sterility and exhibits slower protein storage vacuoles (PSVs) vacuolation rate in aleurone layers upon seed germination (PubMed:20699403). The myb33 myb65 double mutant is defective in anther development, with a tapetum undergoing hypertrophy at the pollen mother cell stage, resulting in premeiotic abortion of pollen development and male sterility. This sterility is conditional, fertility being increased both under higher light or lower temperature conditions (PubMed:15722475).</text>
</comment>
<comment type="sequence caution" evidence="11">
    <conflict type="frameshift">
        <sequence resource="EMBL-CDS" id="AAC83621"/>
    </conflict>
</comment>
<gene>
    <name evidence="10" type="primary">MYB65</name>
    <name evidence="12" type="ordered locus">At3g11440</name>
    <name evidence="13" type="ORF">F24K9.11</name>
</gene>
<sequence>MSYTTATADSDDGMHSSIHNESPAPDSISNGCRSRGKRSVLKKGPWTSTEDGILIDYVKKHGEGNWNAVQKHTSLARCGKSCRLRWANHLRPNLKKGAFSQEEEQLIVEMHAKMGNKWAQMAEHLPGRTDNEIKNYWNTRIKRRQRAGLPLYPPEIYVDDLHWSEEYTKSNIIRVDRRRRHQDFLQLGNSKDNVLFDDLNFAASLLPAASDLSDLVACNMLGTGASSSRYESYMPPILPSPKQIWESGSRFPMCSSNIKHEFQSPEHFQNTAVQKNPRSCSISPCDVDHHPYENQHSSHMMMVPDSHTVTYGMHPTSKPLFGAVKLELPSFQYSETSAFDQWKTTPSPPHSDLLDSVDAYIQSPPPSQVEESDCFSSCDTGLLDMLLHEAKIKTSAKHSLLMSSPQKSFSSTTCTTNVTQNVPRGSENLIKSGEYEDSQKYLGRSEITSPSQLSAGGFSSAFAGNVVKTEELDQVWEPKRVDITRPDVLLASSWLDQGCYGIVSDTSSMSDALALLGGDDIGNSYVTVGSSSGQAPRGVGSYGWTNMPPVWSL</sequence>
<keyword id="KW-0010">Activator</keyword>
<keyword id="KW-0217">Developmental protein</keyword>
<keyword id="KW-0221">Differentiation</keyword>
<keyword id="KW-0238">DNA-binding</keyword>
<keyword id="KW-0287">Flowering</keyword>
<keyword id="KW-0539">Nucleus</keyword>
<keyword id="KW-1185">Reference proteome</keyword>
<keyword id="KW-0677">Repeat</keyword>
<keyword id="KW-0804">Transcription</keyword>
<keyword id="KW-0805">Transcription regulation</keyword>
<protein>
    <recommendedName>
        <fullName evidence="10">Transcription factor MYB65</fullName>
    </recommendedName>
    <alternativeName>
        <fullName evidence="10">Myb-related protein 65</fullName>
        <shortName evidence="10">AtMYB65</shortName>
    </alternativeName>
</protein>
<name>MYB65_ARATH</name>